<feature type="chain" id="PRO_0000249549" description="Protein lin-9 homolog">
    <location>
        <begin position="1"/>
        <end position="543"/>
    </location>
</feature>
<feature type="region of interest" description="Disordered" evidence="3">
    <location>
        <begin position="21"/>
        <end position="82"/>
    </location>
</feature>
<feature type="coiled-coil region" evidence="2">
    <location>
        <begin position="355"/>
        <end position="451"/>
    </location>
</feature>
<feature type="compositionally biased region" description="Polar residues" evidence="3">
    <location>
        <begin position="24"/>
        <end position="55"/>
    </location>
</feature>
<reference key="1">
    <citation type="journal article" date="2013" name="Nature">
        <title>The zebrafish reference genome sequence and its relationship to the human genome.</title>
        <authorList>
            <person name="Howe K."/>
            <person name="Clark M.D."/>
            <person name="Torroja C.F."/>
            <person name="Torrance J."/>
            <person name="Berthelot C."/>
            <person name="Muffato M."/>
            <person name="Collins J.E."/>
            <person name="Humphray S."/>
            <person name="McLaren K."/>
            <person name="Matthews L."/>
            <person name="McLaren S."/>
            <person name="Sealy I."/>
            <person name="Caccamo M."/>
            <person name="Churcher C."/>
            <person name="Scott C."/>
            <person name="Barrett J.C."/>
            <person name="Koch R."/>
            <person name="Rauch G.J."/>
            <person name="White S."/>
            <person name="Chow W."/>
            <person name="Kilian B."/>
            <person name="Quintais L.T."/>
            <person name="Guerra-Assuncao J.A."/>
            <person name="Zhou Y."/>
            <person name="Gu Y."/>
            <person name="Yen J."/>
            <person name="Vogel J.H."/>
            <person name="Eyre T."/>
            <person name="Redmond S."/>
            <person name="Banerjee R."/>
            <person name="Chi J."/>
            <person name="Fu B."/>
            <person name="Langley E."/>
            <person name="Maguire S.F."/>
            <person name="Laird G.K."/>
            <person name="Lloyd D."/>
            <person name="Kenyon E."/>
            <person name="Donaldson S."/>
            <person name="Sehra H."/>
            <person name="Almeida-King J."/>
            <person name="Loveland J."/>
            <person name="Trevanion S."/>
            <person name="Jones M."/>
            <person name="Quail M."/>
            <person name="Willey D."/>
            <person name="Hunt A."/>
            <person name="Burton J."/>
            <person name="Sims S."/>
            <person name="McLay K."/>
            <person name="Plumb B."/>
            <person name="Davis J."/>
            <person name="Clee C."/>
            <person name="Oliver K."/>
            <person name="Clark R."/>
            <person name="Riddle C."/>
            <person name="Elliot D."/>
            <person name="Threadgold G."/>
            <person name="Harden G."/>
            <person name="Ware D."/>
            <person name="Begum S."/>
            <person name="Mortimore B."/>
            <person name="Kerry G."/>
            <person name="Heath P."/>
            <person name="Phillimore B."/>
            <person name="Tracey A."/>
            <person name="Corby N."/>
            <person name="Dunn M."/>
            <person name="Johnson C."/>
            <person name="Wood J."/>
            <person name="Clark S."/>
            <person name="Pelan S."/>
            <person name="Griffiths G."/>
            <person name="Smith M."/>
            <person name="Glithero R."/>
            <person name="Howden P."/>
            <person name="Barker N."/>
            <person name="Lloyd C."/>
            <person name="Stevens C."/>
            <person name="Harley J."/>
            <person name="Holt K."/>
            <person name="Panagiotidis G."/>
            <person name="Lovell J."/>
            <person name="Beasley H."/>
            <person name="Henderson C."/>
            <person name="Gordon D."/>
            <person name="Auger K."/>
            <person name="Wright D."/>
            <person name="Collins J."/>
            <person name="Raisen C."/>
            <person name="Dyer L."/>
            <person name="Leung K."/>
            <person name="Robertson L."/>
            <person name="Ambridge K."/>
            <person name="Leongamornlert D."/>
            <person name="McGuire S."/>
            <person name="Gilderthorp R."/>
            <person name="Griffiths C."/>
            <person name="Manthravadi D."/>
            <person name="Nichol S."/>
            <person name="Barker G."/>
            <person name="Whitehead S."/>
            <person name="Kay M."/>
            <person name="Brown J."/>
            <person name="Murnane C."/>
            <person name="Gray E."/>
            <person name="Humphries M."/>
            <person name="Sycamore N."/>
            <person name="Barker D."/>
            <person name="Saunders D."/>
            <person name="Wallis J."/>
            <person name="Babbage A."/>
            <person name="Hammond S."/>
            <person name="Mashreghi-Mohammadi M."/>
            <person name="Barr L."/>
            <person name="Martin S."/>
            <person name="Wray P."/>
            <person name="Ellington A."/>
            <person name="Matthews N."/>
            <person name="Ellwood M."/>
            <person name="Woodmansey R."/>
            <person name="Clark G."/>
            <person name="Cooper J."/>
            <person name="Tromans A."/>
            <person name="Grafham D."/>
            <person name="Skuce C."/>
            <person name="Pandian R."/>
            <person name="Andrews R."/>
            <person name="Harrison E."/>
            <person name="Kimberley A."/>
            <person name="Garnett J."/>
            <person name="Fosker N."/>
            <person name="Hall R."/>
            <person name="Garner P."/>
            <person name="Kelly D."/>
            <person name="Bird C."/>
            <person name="Palmer S."/>
            <person name="Gehring I."/>
            <person name="Berger A."/>
            <person name="Dooley C.M."/>
            <person name="Ersan-Urun Z."/>
            <person name="Eser C."/>
            <person name="Geiger H."/>
            <person name="Geisler M."/>
            <person name="Karotki L."/>
            <person name="Kirn A."/>
            <person name="Konantz J."/>
            <person name="Konantz M."/>
            <person name="Oberlander M."/>
            <person name="Rudolph-Geiger S."/>
            <person name="Teucke M."/>
            <person name="Lanz C."/>
            <person name="Raddatz G."/>
            <person name="Osoegawa K."/>
            <person name="Zhu B."/>
            <person name="Rapp A."/>
            <person name="Widaa S."/>
            <person name="Langford C."/>
            <person name="Yang F."/>
            <person name="Schuster S.C."/>
            <person name="Carter N.P."/>
            <person name="Harrow J."/>
            <person name="Ning Z."/>
            <person name="Herrero J."/>
            <person name="Searle S.M."/>
            <person name="Enright A."/>
            <person name="Geisler R."/>
            <person name="Plasterk R.H."/>
            <person name="Lee C."/>
            <person name="Westerfield M."/>
            <person name="de Jong P.J."/>
            <person name="Zon L.I."/>
            <person name="Postlethwait J.H."/>
            <person name="Nusslein-Volhard C."/>
            <person name="Hubbard T.J."/>
            <person name="Roest Crollius H."/>
            <person name="Rogers J."/>
            <person name="Stemple D.L."/>
        </authorList>
    </citation>
    <scope>NUCLEOTIDE SEQUENCE [LARGE SCALE GENOMIC DNA]</scope>
    <source>
        <strain>Tuebingen</strain>
    </source>
</reference>
<protein>
    <recommendedName>
        <fullName>Protein lin-9 homolog</fullName>
    </recommendedName>
</protein>
<dbReference type="EMBL" id="BX470188">
    <property type="protein sequence ID" value="CAI20899.1"/>
    <property type="molecule type" value="Genomic_DNA"/>
</dbReference>
<dbReference type="RefSeq" id="NP_001038411.1">
    <property type="nucleotide sequence ID" value="NM_001044946.1"/>
</dbReference>
<dbReference type="SMR" id="Q5RHQ8"/>
<dbReference type="FunCoup" id="Q5RHQ8">
    <property type="interactions" value="2167"/>
</dbReference>
<dbReference type="STRING" id="7955.ENSDARP00000127210"/>
<dbReference type="PaxDb" id="7955-ENSDARP00000127210"/>
<dbReference type="Ensembl" id="ENSDART00000152976">
    <property type="protein sequence ID" value="ENSDARP00000127210"/>
    <property type="gene ID" value="ENSDARG00000028475"/>
</dbReference>
<dbReference type="GeneID" id="560867"/>
<dbReference type="KEGG" id="dre:560867"/>
<dbReference type="AGR" id="ZFIN:ZDB-GENE-030131-1747"/>
<dbReference type="CTD" id="286826"/>
<dbReference type="ZFIN" id="ZDB-GENE-030131-1747">
    <property type="gene designation" value="lin9"/>
</dbReference>
<dbReference type="eggNOG" id="KOG1019">
    <property type="taxonomic scope" value="Eukaryota"/>
</dbReference>
<dbReference type="InParanoid" id="Q5RHQ8"/>
<dbReference type="OMA" id="KEEMIPP"/>
<dbReference type="OrthoDB" id="2339771at2759"/>
<dbReference type="PhylomeDB" id="Q5RHQ8"/>
<dbReference type="TreeFam" id="TF314315"/>
<dbReference type="Reactome" id="R-DRE-1538133">
    <property type="pathway name" value="G0 and Early G1"/>
</dbReference>
<dbReference type="PRO" id="PR:Q5RHQ8"/>
<dbReference type="Proteomes" id="UP000000437">
    <property type="component" value="Chromosome 20"/>
</dbReference>
<dbReference type="Bgee" id="ENSDARG00000028475">
    <property type="expression patterns" value="Expressed in testis and 28 other cell types or tissues"/>
</dbReference>
<dbReference type="ExpressionAtlas" id="Q5RHQ8">
    <property type="expression patterns" value="baseline"/>
</dbReference>
<dbReference type="GO" id="GO:0005654">
    <property type="term" value="C:nucleoplasm"/>
    <property type="evidence" value="ECO:0000318"/>
    <property type="project" value="GO_Central"/>
</dbReference>
<dbReference type="GO" id="GO:0017053">
    <property type="term" value="C:transcription repressor complex"/>
    <property type="evidence" value="ECO:0007669"/>
    <property type="project" value="InterPro"/>
</dbReference>
<dbReference type="GO" id="GO:0003677">
    <property type="term" value="F:DNA binding"/>
    <property type="evidence" value="ECO:0000318"/>
    <property type="project" value="GO_Central"/>
</dbReference>
<dbReference type="GO" id="GO:0006351">
    <property type="term" value="P:DNA-templated transcription"/>
    <property type="evidence" value="ECO:0007669"/>
    <property type="project" value="InterPro"/>
</dbReference>
<dbReference type="GO" id="GO:0051726">
    <property type="term" value="P:regulation of cell cycle"/>
    <property type="evidence" value="ECO:0000315"/>
    <property type="project" value="ZFIN"/>
</dbReference>
<dbReference type="GO" id="GO:0006357">
    <property type="term" value="P:regulation of transcription by RNA polymerase II"/>
    <property type="evidence" value="ECO:0000318"/>
    <property type="project" value="GO_Central"/>
</dbReference>
<dbReference type="InterPro" id="IPR033471">
    <property type="entry name" value="DIRP"/>
</dbReference>
<dbReference type="InterPro" id="IPR010561">
    <property type="entry name" value="LIN-9/ALY1"/>
</dbReference>
<dbReference type="InterPro" id="IPR045831">
    <property type="entry name" value="LIN9_C"/>
</dbReference>
<dbReference type="PANTHER" id="PTHR21689">
    <property type="entry name" value="LIN-9"/>
    <property type="match status" value="1"/>
</dbReference>
<dbReference type="PANTHER" id="PTHR21689:SF2">
    <property type="entry name" value="PROTEIN LIN-9 HOMOLOG"/>
    <property type="match status" value="1"/>
</dbReference>
<dbReference type="Pfam" id="PF06584">
    <property type="entry name" value="DIRP"/>
    <property type="match status" value="1"/>
</dbReference>
<dbReference type="Pfam" id="PF19438">
    <property type="entry name" value="LIN9_C"/>
    <property type="match status" value="1"/>
</dbReference>
<dbReference type="SMART" id="SM01135">
    <property type="entry name" value="DIRP"/>
    <property type="match status" value="1"/>
</dbReference>
<accession>Q5RHQ8</accession>
<name>LIN9_DANRE</name>
<evidence type="ECO:0000250" key="1"/>
<evidence type="ECO:0000255" key="2"/>
<evidence type="ECO:0000256" key="3">
    <source>
        <dbReference type="SAM" id="MobiDB-lite"/>
    </source>
</evidence>
<evidence type="ECO:0000305" key="4"/>
<proteinExistence type="inferred from homology"/>
<sequence length="543" mass="61731">MAELEQLLDESSSAKALVSLREGSLSNTLNEKNNLPKSQTTRGRSSYVSMETPTRSSKRSRLSCEDEERPIASRSPRRSQRVTTMPQKLTNVATPDKRVSQKIGLRLRNLLKLPKAHKWCIYEWFYSNIDRPLFEGDNDFCLCLKESFPNLKTRKLTRVEWGTIRRLMGKPRRCSSAFFAEERMALKQKRQKMRLLQQRKITDMSLCKDLPDEIPLPLVIGTKVTARLRGVHDGLFTGQIDAVDTSAATYRVTFDRNGLGTHTVPDYEVLSNEPHETMPISAFAQKQRPPRFQNFLTPPRGSYTGSTQSILMDNDPLFSQSPWRSKLTGTDGETLGGFPVKFLVQVTRLSKILMIKKEHIKHLKEMNTEAEKLKSYSMPIGLDLQKRYATTVLDLEQLNKDLNKVLHEVQQFCFELAPDQGMQPADQPSELRRRCEEESQDVLRQNNTLASGEPRVQNTELTQLISRLTALLLQIRCLAEGGDLNSFEFKSLTDSLNDIKSSIDDSNLSCFQDNVEIHVAHIQSGLSQLGNLHAFSANNTNRT</sequence>
<comment type="subunit">
    <text evidence="1">Component of the DREAM complex.</text>
</comment>
<comment type="subcellular location">
    <subcellularLocation>
        <location evidence="1">Nucleus</location>
    </subcellularLocation>
</comment>
<comment type="similarity">
    <text evidence="4">Belongs to the lin-9 family.</text>
</comment>
<gene>
    <name type="primary">lin9</name>
    <name type="ORF">si:dkey-206f10.4</name>
</gene>
<organism>
    <name type="scientific">Danio rerio</name>
    <name type="common">Zebrafish</name>
    <name type="synonym">Brachydanio rerio</name>
    <dbReference type="NCBI Taxonomy" id="7955"/>
    <lineage>
        <taxon>Eukaryota</taxon>
        <taxon>Metazoa</taxon>
        <taxon>Chordata</taxon>
        <taxon>Craniata</taxon>
        <taxon>Vertebrata</taxon>
        <taxon>Euteleostomi</taxon>
        <taxon>Actinopterygii</taxon>
        <taxon>Neopterygii</taxon>
        <taxon>Teleostei</taxon>
        <taxon>Ostariophysi</taxon>
        <taxon>Cypriniformes</taxon>
        <taxon>Danionidae</taxon>
        <taxon>Danioninae</taxon>
        <taxon>Danio</taxon>
    </lineage>
</organism>
<keyword id="KW-0175">Coiled coil</keyword>
<keyword id="KW-0539">Nucleus</keyword>
<keyword id="KW-1185">Reference proteome</keyword>